<protein>
    <recommendedName>
        <fullName evidence="1">Protease HtpX homolog 2</fullName>
        <ecNumber evidence="1">3.4.24.-</ecNumber>
    </recommendedName>
</protein>
<evidence type="ECO:0000255" key="1">
    <source>
        <dbReference type="HAMAP-Rule" id="MF_00188"/>
    </source>
</evidence>
<name>HTPX2_STRCO</name>
<gene>
    <name evidence="1" type="primary">htpX2</name>
    <name type="ordered locus">SCO4609</name>
    <name type="ORF">SCD39.09</name>
</gene>
<sequence>MHRRHNGLRTAVLLGGLSALIIVIGSFFGRAGLVVAVLVALGTNAYAYWNSDKLALRAMRARPVSEFEAPALYRMVRELSTQARQPMPRLYISPTDAPNAFATGRNPRNAAVCCTEGIMRLLDERELRGVIGHELSHVYNRDILISSVAGALASVIMFLVNFAWLIPVGRSNDDDGPGLLGMLLIMLLGPLAATVIQLAISRSREYEADASGAQLTGDPLALAGALRKLELGTKQLPLPPEPRLETASHMMIANPFRPGQGISKMFSTHPPMAERIARLEKMAGRQQ</sequence>
<accession>Q9F2V2</accession>
<organism>
    <name type="scientific">Streptomyces coelicolor (strain ATCC BAA-471 / A3(2) / M145)</name>
    <dbReference type="NCBI Taxonomy" id="100226"/>
    <lineage>
        <taxon>Bacteria</taxon>
        <taxon>Bacillati</taxon>
        <taxon>Actinomycetota</taxon>
        <taxon>Actinomycetes</taxon>
        <taxon>Kitasatosporales</taxon>
        <taxon>Streptomycetaceae</taxon>
        <taxon>Streptomyces</taxon>
        <taxon>Streptomyces albidoflavus group</taxon>
    </lineage>
</organism>
<feature type="chain" id="PRO_0000138893" description="Protease HtpX homolog 2">
    <location>
        <begin position="1"/>
        <end position="287"/>
    </location>
</feature>
<feature type="transmembrane region" description="Helical" evidence="1">
    <location>
        <begin position="7"/>
        <end position="29"/>
    </location>
</feature>
<feature type="transmembrane region" description="Helical" evidence="1">
    <location>
        <begin position="33"/>
        <end position="50"/>
    </location>
</feature>
<feature type="transmembrane region" description="Helical" evidence="1">
    <location>
        <begin position="148"/>
        <end position="168"/>
    </location>
</feature>
<feature type="transmembrane region" description="Helical" evidence="1">
    <location>
        <begin position="180"/>
        <end position="200"/>
    </location>
</feature>
<feature type="active site" evidence="1">
    <location>
        <position position="134"/>
    </location>
</feature>
<feature type="binding site" evidence="1">
    <location>
        <position position="133"/>
    </location>
    <ligand>
        <name>Zn(2+)</name>
        <dbReference type="ChEBI" id="CHEBI:29105"/>
        <note>catalytic</note>
    </ligand>
</feature>
<feature type="binding site" evidence="1">
    <location>
        <position position="137"/>
    </location>
    <ligand>
        <name>Zn(2+)</name>
        <dbReference type="ChEBI" id="CHEBI:29105"/>
        <note>catalytic</note>
    </ligand>
</feature>
<feature type="binding site" evidence="1">
    <location>
        <position position="205"/>
    </location>
    <ligand>
        <name>Zn(2+)</name>
        <dbReference type="ChEBI" id="CHEBI:29105"/>
        <note>catalytic</note>
    </ligand>
</feature>
<proteinExistence type="inferred from homology"/>
<dbReference type="EC" id="3.4.24.-" evidence="1"/>
<dbReference type="EMBL" id="AL939120">
    <property type="protein sequence ID" value="CAC08262.1"/>
    <property type="molecule type" value="Genomic_DNA"/>
</dbReference>
<dbReference type="RefSeq" id="NP_628771.1">
    <property type="nucleotide sequence ID" value="NC_003888.3"/>
</dbReference>
<dbReference type="SMR" id="Q9F2V2"/>
<dbReference type="FunCoup" id="Q9F2V2">
    <property type="interactions" value="33"/>
</dbReference>
<dbReference type="STRING" id="100226.gene:17762254"/>
<dbReference type="PaxDb" id="100226-SCO4609"/>
<dbReference type="KEGG" id="sco:SCO4609"/>
<dbReference type="PATRIC" id="fig|100226.15.peg.4681"/>
<dbReference type="eggNOG" id="COG0501">
    <property type="taxonomic scope" value="Bacteria"/>
</dbReference>
<dbReference type="HOGENOM" id="CLU_042266_3_1_11"/>
<dbReference type="InParanoid" id="Q9F2V2"/>
<dbReference type="OrthoDB" id="15218at2"/>
<dbReference type="PhylomeDB" id="Q9F2V2"/>
<dbReference type="Proteomes" id="UP000001973">
    <property type="component" value="Chromosome"/>
</dbReference>
<dbReference type="GO" id="GO:0005886">
    <property type="term" value="C:plasma membrane"/>
    <property type="evidence" value="ECO:0007669"/>
    <property type="project" value="UniProtKB-SubCell"/>
</dbReference>
<dbReference type="GO" id="GO:0004222">
    <property type="term" value="F:metalloendopeptidase activity"/>
    <property type="evidence" value="ECO:0007669"/>
    <property type="project" value="UniProtKB-UniRule"/>
</dbReference>
<dbReference type="GO" id="GO:0008270">
    <property type="term" value="F:zinc ion binding"/>
    <property type="evidence" value="ECO:0007669"/>
    <property type="project" value="UniProtKB-UniRule"/>
</dbReference>
<dbReference type="GO" id="GO:0006508">
    <property type="term" value="P:proteolysis"/>
    <property type="evidence" value="ECO:0007669"/>
    <property type="project" value="UniProtKB-KW"/>
</dbReference>
<dbReference type="CDD" id="cd07336">
    <property type="entry name" value="M48B_HtpX_like"/>
    <property type="match status" value="1"/>
</dbReference>
<dbReference type="Gene3D" id="3.30.2010.10">
    <property type="entry name" value="Metalloproteases ('zincins'), catalytic domain"/>
    <property type="match status" value="1"/>
</dbReference>
<dbReference type="HAMAP" id="MF_00188">
    <property type="entry name" value="Pept_M48_protease_HtpX"/>
    <property type="match status" value="1"/>
</dbReference>
<dbReference type="InterPro" id="IPR050083">
    <property type="entry name" value="HtpX_protease"/>
</dbReference>
<dbReference type="InterPro" id="IPR022919">
    <property type="entry name" value="Pept_M48_protease_HtpX"/>
</dbReference>
<dbReference type="InterPro" id="IPR001915">
    <property type="entry name" value="Peptidase_M48"/>
</dbReference>
<dbReference type="NCBIfam" id="NF002839">
    <property type="entry name" value="PRK03072.1"/>
    <property type="match status" value="1"/>
</dbReference>
<dbReference type="PANTHER" id="PTHR43221">
    <property type="entry name" value="PROTEASE HTPX"/>
    <property type="match status" value="1"/>
</dbReference>
<dbReference type="PANTHER" id="PTHR43221:SF1">
    <property type="entry name" value="PROTEASE HTPX"/>
    <property type="match status" value="1"/>
</dbReference>
<dbReference type="Pfam" id="PF01435">
    <property type="entry name" value="Peptidase_M48"/>
    <property type="match status" value="1"/>
</dbReference>
<dbReference type="PROSITE" id="PS00142">
    <property type="entry name" value="ZINC_PROTEASE"/>
    <property type="match status" value="1"/>
</dbReference>
<keyword id="KW-1003">Cell membrane</keyword>
<keyword id="KW-0378">Hydrolase</keyword>
<keyword id="KW-0472">Membrane</keyword>
<keyword id="KW-0479">Metal-binding</keyword>
<keyword id="KW-0482">Metalloprotease</keyword>
<keyword id="KW-0645">Protease</keyword>
<keyword id="KW-1185">Reference proteome</keyword>
<keyword id="KW-0812">Transmembrane</keyword>
<keyword id="KW-1133">Transmembrane helix</keyword>
<keyword id="KW-0862">Zinc</keyword>
<comment type="cofactor">
    <cofactor evidence="1">
        <name>Zn(2+)</name>
        <dbReference type="ChEBI" id="CHEBI:29105"/>
    </cofactor>
    <text evidence="1">Binds 1 zinc ion per subunit.</text>
</comment>
<comment type="subcellular location">
    <subcellularLocation>
        <location evidence="1">Cell membrane</location>
        <topology evidence="1">Multi-pass membrane protein</topology>
    </subcellularLocation>
</comment>
<comment type="similarity">
    <text evidence="1">Belongs to the peptidase M48B family.</text>
</comment>
<reference key="1">
    <citation type="journal article" date="2002" name="Nature">
        <title>Complete genome sequence of the model actinomycete Streptomyces coelicolor A3(2).</title>
        <authorList>
            <person name="Bentley S.D."/>
            <person name="Chater K.F."/>
            <person name="Cerdeno-Tarraga A.-M."/>
            <person name="Challis G.L."/>
            <person name="Thomson N.R."/>
            <person name="James K.D."/>
            <person name="Harris D.E."/>
            <person name="Quail M.A."/>
            <person name="Kieser H."/>
            <person name="Harper D."/>
            <person name="Bateman A."/>
            <person name="Brown S."/>
            <person name="Chandra G."/>
            <person name="Chen C.W."/>
            <person name="Collins M."/>
            <person name="Cronin A."/>
            <person name="Fraser A."/>
            <person name="Goble A."/>
            <person name="Hidalgo J."/>
            <person name="Hornsby T."/>
            <person name="Howarth S."/>
            <person name="Huang C.-H."/>
            <person name="Kieser T."/>
            <person name="Larke L."/>
            <person name="Murphy L.D."/>
            <person name="Oliver K."/>
            <person name="O'Neil S."/>
            <person name="Rabbinowitsch E."/>
            <person name="Rajandream M.A."/>
            <person name="Rutherford K.M."/>
            <person name="Rutter S."/>
            <person name="Seeger K."/>
            <person name="Saunders D."/>
            <person name="Sharp S."/>
            <person name="Squares R."/>
            <person name="Squares S."/>
            <person name="Taylor K."/>
            <person name="Warren T."/>
            <person name="Wietzorrek A."/>
            <person name="Woodward J.R."/>
            <person name="Barrell B.G."/>
            <person name="Parkhill J."/>
            <person name="Hopwood D.A."/>
        </authorList>
    </citation>
    <scope>NUCLEOTIDE SEQUENCE [LARGE SCALE GENOMIC DNA]</scope>
    <source>
        <strain>ATCC BAA-471 / A3(2) / M145</strain>
    </source>
</reference>